<comment type="function">
    <text evidence="1">Catalyzes the synthesis of Und-PP-GlcNAc-ManNAcA (Lipid II), the second lipid-linked intermediate involved in enterobacterial common antigen (ECA) synthesis.</text>
</comment>
<comment type="catalytic activity">
    <reaction evidence="1">
        <text>UDP-N-acetyl-alpha-D-mannosaminouronate + N-acetyl-alpha-D-glucosaminyl-di-trans,octa-cis-undecaprenyl diphosphate = beta-D-ManNAcA-(1-&gt;4)-alpha-D-GlcNAc-di-trans,octa-cis-undecaprenyl diphosphate + UDP + H(+)</text>
        <dbReference type="Rhea" id="RHEA:28366"/>
        <dbReference type="ChEBI" id="CHEBI:15378"/>
        <dbReference type="ChEBI" id="CHEBI:58223"/>
        <dbReference type="ChEBI" id="CHEBI:61495"/>
        <dbReference type="ChEBI" id="CHEBI:62959"/>
        <dbReference type="ChEBI" id="CHEBI:70731"/>
        <dbReference type="EC" id="2.4.1.180"/>
    </reaction>
</comment>
<comment type="pathway">
    <text evidence="1">Bacterial outer membrane biogenesis; enterobacterial common antigen biosynthesis.</text>
</comment>
<comment type="similarity">
    <text evidence="1">Belongs to the glycosyltransferase 26 family.</text>
</comment>
<proteinExistence type="inferred from homology"/>
<keyword id="KW-0328">Glycosyltransferase</keyword>
<keyword id="KW-0808">Transferase</keyword>
<protein>
    <recommendedName>
        <fullName evidence="1">UDP-N-acetyl-D-mannosaminuronic acid transferase</fullName>
        <shortName evidence="1">UDP-ManNAcA transferase</shortName>
        <ecNumber evidence="1">2.4.1.180</ecNumber>
    </recommendedName>
</protein>
<gene>
    <name evidence="1" type="primary">wecG</name>
    <name evidence="1" type="synonym">rffM</name>
    <name type="ordered locus">YPN_0108</name>
    <name type="ORF">YP516_0061</name>
</gene>
<sequence>MEPNTVIPKYNVRGFEIWGFRDMAQVLDHLLGSGPVKTGTLVAMNAEKLLKAEDDTALCELIKNAEYLYADGISMVRAIRRKYPQAELSRVAGADLWEALMQRAGQQGTPVFLVGGKPDVLAETEAKLRAQWNVNLVGSQDGYFTPEQREALFARIAASGAAIVTVAMGSPKQEIFMRDCRKFYPDALYMGVGGTYDVFTSHVKRAPKIWQNMGLEWLYRLLAQPSRIRRQLKLLKFVGYYYSGRL</sequence>
<name>WECG_YERPN</name>
<dbReference type="EC" id="2.4.1.180" evidence="1"/>
<dbReference type="EMBL" id="CP000305">
    <property type="protein sequence ID" value="ABG16441.1"/>
    <property type="molecule type" value="Genomic_DNA"/>
</dbReference>
<dbReference type="EMBL" id="ACNQ01000001">
    <property type="protein sequence ID" value="EEO78549.1"/>
    <property type="molecule type" value="Genomic_DNA"/>
</dbReference>
<dbReference type="RefSeq" id="WP_002211977.1">
    <property type="nucleotide sequence ID" value="NZ_ACNQ01000001.1"/>
</dbReference>
<dbReference type="SMR" id="Q1CNI9"/>
<dbReference type="CAZy" id="GT26">
    <property type="family name" value="Glycosyltransferase Family 26"/>
</dbReference>
<dbReference type="GeneID" id="57974848"/>
<dbReference type="KEGG" id="ypn:YPN_0108"/>
<dbReference type="HOGENOM" id="CLU_063203_3_2_6"/>
<dbReference type="UniPathway" id="UPA00566"/>
<dbReference type="Proteomes" id="UP000008936">
    <property type="component" value="Chromosome"/>
</dbReference>
<dbReference type="GO" id="GO:0047241">
    <property type="term" value="F:lipopolysaccharide N-acetylmannosaminouronosyltransferase activity"/>
    <property type="evidence" value="ECO:0007669"/>
    <property type="project" value="UniProtKB-UniRule"/>
</dbReference>
<dbReference type="GO" id="GO:0009246">
    <property type="term" value="P:enterobacterial common antigen biosynthetic process"/>
    <property type="evidence" value="ECO:0007669"/>
    <property type="project" value="UniProtKB-UniRule"/>
</dbReference>
<dbReference type="CDD" id="cd06533">
    <property type="entry name" value="Glyco_transf_WecG_TagA"/>
    <property type="match status" value="1"/>
</dbReference>
<dbReference type="HAMAP" id="MF_01001">
    <property type="entry name" value="WecG_RffM"/>
    <property type="match status" value="1"/>
</dbReference>
<dbReference type="InterPro" id="IPR023085">
    <property type="entry name" value="UDP-ManNAcA_Trfase_WecG"/>
</dbReference>
<dbReference type="InterPro" id="IPR004629">
    <property type="entry name" value="WecG_TagA_CpsF"/>
</dbReference>
<dbReference type="NCBIfam" id="NF002980">
    <property type="entry name" value="PRK03692.1"/>
    <property type="match status" value="1"/>
</dbReference>
<dbReference type="NCBIfam" id="TIGR00696">
    <property type="entry name" value="wecG_tagA_cpsF"/>
    <property type="match status" value="1"/>
</dbReference>
<dbReference type="PANTHER" id="PTHR34136">
    <property type="match status" value="1"/>
</dbReference>
<dbReference type="PANTHER" id="PTHR34136:SF1">
    <property type="entry name" value="UDP-N-ACETYL-D-MANNOSAMINURONIC ACID TRANSFERASE"/>
    <property type="match status" value="1"/>
</dbReference>
<dbReference type="Pfam" id="PF03808">
    <property type="entry name" value="Glyco_tran_WecG"/>
    <property type="match status" value="1"/>
</dbReference>
<feature type="chain" id="PRO_1000062737" description="UDP-N-acetyl-D-mannosaminuronic acid transferase">
    <location>
        <begin position="1"/>
        <end position="246"/>
    </location>
</feature>
<organism>
    <name type="scientific">Yersinia pestis bv. Antiqua (strain Nepal516)</name>
    <dbReference type="NCBI Taxonomy" id="377628"/>
    <lineage>
        <taxon>Bacteria</taxon>
        <taxon>Pseudomonadati</taxon>
        <taxon>Pseudomonadota</taxon>
        <taxon>Gammaproteobacteria</taxon>
        <taxon>Enterobacterales</taxon>
        <taxon>Yersiniaceae</taxon>
        <taxon>Yersinia</taxon>
    </lineage>
</organism>
<reference key="1">
    <citation type="journal article" date="2006" name="J. Bacteriol.">
        <title>Complete genome sequence of Yersinia pestis strains Antiqua and Nepal516: evidence of gene reduction in an emerging pathogen.</title>
        <authorList>
            <person name="Chain P.S.G."/>
            <person name="Hu P."/>
            <person name="Malfatti S.A."/>
            <person name="Radnedge L."/>
            <person name="Larimer F."/>
            <person name="Vergez L.M."/>
            <person name="Worsham P."/>
            <person name="Chu M.C."/>
            <person name="Andersen G.L."/>
        </authorList>
    </citation>
    <scope>NUCLEOTIDE SEQUENCE [LARGE SCALE GENOMIC DNA]</scope>
    <source>
        <strain>Nepal516</strain>
    </source>
</reference>
<reference key="2">
    <citation type="submission" date="2009-04" db="EMBL/GenBank/DDBJ databases">
        <title>Yersinia pestis Nepal516A whole genome shotgun sequencing project.</title>
        <authorList>
            <person name="Plunkett G. III"/>
            <person name="Anderson B.D."/>
            <person name="Baumler D.J."/>
            <person name="Burland V."/>
            <person name="Cabot E.L."/>
            <person name="Glasner J.D."/>
            <person name="Mau B."/>
            <person name="Neeno-Eckwall E."/>
            <person name="Perna N.T."/>
            <person name="Munk A.C."/>
            <person name="Tapia R."/>
            <person name="Green L.D."/>
            <person name="Rogers Y.C."/>
            <person name="Detter J.C."/>
            <person name="Bruce D.C."/>
            <person name="Brettin T.S."/>
        </authorList>
    </citation>
    <scope>NUCLEOTIDE SEQUENCE [LARGE SCALE GENOMIC DNA]</scope>
    <source>
        <strain>Nepal516</strain>
    </source>
</reference>
<evidence type="ECO:0000255" key="1">
    <source>
        <dbReference type="HAMAP-Rule" id="MF_01001"/>
    </source>
</evidence>
<accession>Q1CNI9</accession>
<accession>D1Q0Z5</accession>